<proteinExistence type="evidence at transcript level"/>
<organism>
    <name type="scientific">Rattus norvegicus</name>
    <name type="common">Rat</name>
    <dbReference type="NCBI Taxonomy" id="10116"/>
    <lineage>
        <taxon>Eukaryota</taxon>
        <taxon>Metazoa</taxon>
        <taxon>Chordata</taxon>
        <taxon>Craniata</taxon>
        <taxon>Vertebrata</taxon>
        <taxon>Euteleostomi</taxon>
        <taxon>Mammalia</taxon>
        <taxon>Eutheria</taxon>
        <taxon>Euarchontoglires</taxon>
        <taxon>Glires</taxon>
        <taxon>Rodentia</taxon>
        <taxon>Myomorpha</taxon>
        <taxon>Muroidea</taxon>
        <taxon>Muridae</taxon>
        <taxon>Murinae</taxon>
        <taxon>Rattus</taxon>
    </lineage>
</organism>
<protein>
    <recommendedName>
        <fullName>CDK2-associated and cullin domain-containing protein 1</fullName>
    </recommendedName>
</protein>
<dbReference type="EMBL" id="BC083839">
    <property type="protein sequence ID" value="AAH83839.1"/>
    <property type="molecule type" value="mRNA"/>
</dbReference>
<dbReference type="RefSeq" id="NP_001014270.1">
    <property type="nucleotide sequence ID" value="NM_001014248.2"/>
</dbReference>
<dbReference type="SMR" id="Q5XI53"/>
<dbReference type="FunCoup" id="Q5XI53">
    <property type="interactions" value="3061"/>
</dbReference>
<dbReference type="STRING" id="10116.ENSRNOP00000072029"/>
<dbReference type="GlyGen" id="Q5XI53">
    <property type="glycosylation" value="1 site"/>
</dbReference>
<dbReference type="PhosphoSitePlus" id="Q5XI53"/>
<dbReference type="PaxDb" id="10116-ENSRNOP00000051311"/>
<dbReference type="Ensembl" id="ENSRNOT00000050617.4">
    <property type="protein sequence ID" value="ENSRNOP00000051311.2"/>
    <property type="gene ID" value="ENSRNOG00000009954.8"/>
</dbReference>
<dbReference type="GeneID" id="365493"/>
<dbReference type="KEGG" id="rno:365493"/>
<dbReference type="AGR" id="RGD:1308127"/>
<dbReference type="CTD" id="143384"/>
<dbReference type="RGD" id="1308127">
    <property type="gene designation" value="Cacul1"/>
</dbReference>
<dbReference type="eggNOG" id="KOG2166">
    <property type="taxonomic scope" value="Eukaryota"/>
</dbReference>
<dbReference type="GeneTree" id="ENSGT00390000000403"/>
<dbReference type="InParanoid" id="Q5XI53"/>
<dbReference type="PhylomeDB" id="Q5XI53"/>
<dbReference type="PRO" id="PR:Q5XI53"/>
<dbReference type="Proteomes" id="UP000002494">
    <property type="component" value="Chromosome 1"/>
</dbReference>
<dbReference type="Bgee" id="ENSRNOG00000009954">
    <property type="expression patterns" value="Expressed in testis and 19 other cell types or tissues"/>
</dbReference>
<dbReference type="ExpressionAtlas" id="Q5XI53">
    <property type="expression patterns" value="baseline and differential"/>
</dbReference>
<dbReference type="GO" id="GO:0019901">
    <property type="term" value="F:protein kinase binding"/>
    <property type="evidence" value="ECO:0000266"/>
    <property type="project" value="RGD"/>
</dbReference>
<dbReference type="GO" id="GO:0031625">
    <property type="term" value="F:ubiquitin protein ligase binding"/>
    <property type="evidence" value="ECO:0007669"/>
    <property type="project" value="InterPro"/>
</dbReference>
<dbReference type="GO" id="GO:0000082">
    <property type="term" value="P:G1/S transition of mitotic cell cycle"/>
    <property type="evidence" value="ECO:0000250"/>
    <property type="project" value="UniProtKB"/>
</dbReference>
<dbReference type="GO" id="GO:0008284">
    <property type="term" value="P:positive regulation of cell population proliferation"/>
    <property type="evidence" value="ECO:0000250"/>
    <property type="project" value="UniProtKB"/>
</dbReference>
<dbReference type="GO" id="GO:0045860">
    <property type="term" value="P:positive regulation of protein kinase activity"/>
    <property type="evidence" value="ECO:0000250"/>
    <property type="project" value="UniProtKB"/>
</dbReference>
<dbReference type="GO" id="GO:0006511">
    <property type="term" value="P:ubiquitin-dependent protein catabolic process"/>
    <property type="evidence" value="ECO:0007669"/>
    <property type="project" value="InterPro"/>
</dbReference>
<dbReference type="FunFam" id="1.20.1310.10:FF:000028">
    <property type="entry name" value="CDK2-associated and cullin domain-containing protein 1"/>
    <property type="match status" value="1"/>
</dbReference>
<dbReference type="Gene3D" id="1.20.1310.10">
    <property type="entry name" value="Cullin Repeats"/>
    <property type="match status" value="1"/>
</dbReference>
<dbReference type="InterPro" id="IPR042652">
    <property type="entry name" value="CACUL1"/>
</dbReference>
<dbReference type="InterPro" id="IPR001373">
    <property type="entry name" value="Cullin_N"/>
</dbReference>
<dbReference type="InterPro" id="IPR016159">
    <property type="entry name" value="Cullin_repeat-like_dom_sf"/>
</dbReference>
<dbReference type="PANTHER" id="PTHR46636">
    <property type="entry name" value="CDK2-ASSOCIATED AND CULLIN DOMAIN-CONTAINING PROTEIN 1"/>
    <property type="match status" value="1"/>
</dbReference>
<dbReference type="PANTHER" id="PTHR46636:SF1">
    <property type="entry name" value="CDK2-ASSOCIATED AND CULLIN DOMAIN-CONTAINING PROTEIN 1"/>
    <property type="match status" value="1"/>
</dbReference>
<dbReference type="Pfam" id="PF00888">
    <property type="entry name" value="Cullin"/>
    <property type="match status" value="1"/>
</dbReference>
<dbReference type="SUPFAM" id="SSF74788">
    <property type="entry name" value="Cullin repeat-like"/>
    <property type="match status" value="1"/>
</dbReference>
<comment type="function">
    <text evidence="1">Cell cycle associated protein capable of promoting cell proliferation through the activation of CDK2 at the G1/S phase transition.</text>
</comment>
<comment type="subunit">
    <text evidence="1">Interacts with CDK2.</text>
</comment>
<comment type="similarity">
    <text evidence="3">Belongs to the cullin family.</text>
</comment>
<sequence length="347" mass="38826">MEESMEEEEMLTYEAMMDDQNHNNWEAAVDSFRQPPPAPPLPPPPPPRPSSSIPDPGRELPGGQLLAVHAGSMDRKGLKEGLPMGSPPLSEPNGVIMMLKSCDAAAAVAKAAPAPTPSSTININTSTSKFLMNVITIEDYKSTYWPKLDGAIDQLLTQSPGDYIPISYEQIYSCVYKCVCQQHSEQMYSDLIKKITSHLERVSKELQASPPDLYIERFNIALGQYMGALQSIVPLFIYMNKFYIETKLNRDLKDDLIKLFTEHVAEKHIYSLMQWVQMAPTLFSKFIPNILPPAVESELSEYAAQDQKLQRELIQNGFTRGDQSRKRAGDELAYNSPSACASSRGYR</sequence>
<reference key="1">
    <citation type="journal article" date="2004" name="Genome Res.">
        <title>The status, quality, and expansion of the NIH full-length cDNA project: the Mammalian Gene Collection (MGC).</title>
        <authorList>
            <consortium name="The MGC Project Team"/>
        </authorList>
    </citation>
    <scope>NUCLEOTIDE SEQUENCE [LARGE SCALE MRNA]</scope>
    <source>
        <tissue>Testis</tissue>
    </source>
</reference>
<keyword id="KW-0131">Cell cycle</keyword>
<keyword id="KW-1185">Reference proteome</keyword>
<feature type="chain" id="PRO_0000119819" description="CDK2-associated and cullin domain-containing protein 1">
    <location>
        <begin position="1"/>
        <end position="347"/>
    </location>
</feature>
<feature type="region of interest" description="Disordered" evidence="2">
    <location>
        <begin position="1"/>
        <end position="63"/>
    </location>
</feature>
<feature type="region of interest" description="Disordered" evidence="2">
    <location>
        <begin position="320"/>
        <end position="347"/>
    </location>
</feature>
<feature type="compositionally biased region" description="Acidic residues" evidence="2">
    <location>
        <begin position="1"/>
        <end position="11"/>
    </location>
</feature>
<feature type="compositionally biased region" description="Pro residues" evidence="2">
    <location>
        <begin position="34"/>
        <end position="49"/>
    </location>
</feature>
<evidence type="ECO:0000250" key="1"/>
<evidence type="ECO:0000256" key="2">
    <source>
        <dbReference type="SAM" id="MobiDB-lite"/>
    </source>
</evidence>
<evidence type="ECO:0000305" key="3"/>
<accession>Q5XI53</accession>
<name>CACL1_RAT</name>
<gene>
    <name type="primary">Cacul1</name>
</gene>